<name>RL34_BEII9</name>
<feature type="chain" id="PRO_1000122897" description="Large ribosomal subunit protein bL34">
    <location>
        <begin position="1"/>
        <end position="44"/>
    </location>
</feature>
<accession>B2IDV3</accession>
<comment type="similarity">
    <text evidence="1">Belongs to the bacterial ribosomal protein bL34 family.</text>
</comment>
<keyword id="KW-1185">Reference proteome</keyword>
<keyword id="KW-0687">Ribonucleoprotein</keyword>
<keyword id="KW-0689">Ribosomal protein</keyword>
<sequence>MKRTYQPSKIVRKRRHGFRARMATVGGRKVLAARRARGRKRLSA</sequence>
<protein>
    <recommendedName>
        <fullName evidence="1">Large ribosomal subunit protein bL34</fullName>
    </recommendedName>
    <alternativeName>
        <fullName evidence="2">50S ribosomal protein L34</fullName>
    </alternativeName>
</protein>
<evidence type="ECO:0000255" key="1">
    <source>
        <dbReference type="HAMAP-Rule" id="MF_00391"/>
    </source>
</evidence>
<evidence type="ECO:0000305" key="2"/>
<dbReference type="EMBL" id="CP001016">
    <property type="protein sequence ID" value="ACB96885.1"/>
    <property type="molecule type" value="Genomic_DNA"/>
</dbReference>
<dbReference type="RefSeq" id="WP_012386233.1">
    <property type="nucleotide sequence ID" value="NC_010581.1"/>
</dbReference>
<dbReference type="SMR" id="B2IDV3"/>
<dbReference type="STRING" id="395963.Bind_3326"/>
<dbReference type="KEGG" id="bid:Bind_3326"/>
<dbReference type="eggNOG" id="COG0230">
    <property type="taxonomic scope" value="Bacteria"/>
</dbReference>
<dbReference type="HOGENOM" id="CLU_129938_2_0_5"/>
<dbReference type="Proteomes" id="UP000001695">
    <property type="component" value="Chromosome"/>
</dbReference>
<dbReference type="GO" id="GO:1990904">
    <property type="term" value="C:ribonucleoprotein complex"/>
    <property type="evidence" value="ECO:0007669"/>
    <property type="project" value="UniProtKB-KW"/>
</dbReference>
<dbReference type="GO" id="GO:0005840">
    <property type="term" value="C:ribosome"/>
    <property type="evidence" value="ECO:0007669"/>
    <property type="project" value="UniProtKB-KW"/>
</dbReference>
<dbReference type="GO" id="GO:0003735">
    <property type="term" value="F:structural constituent of ribosome"/>
    <property type="evidence" value="ECO:0007669"/>
    <property type="project" value="InterPro"/>
</dbReference>
<dbReference type="GO" id="GO:0006412">
    <property type="term" value="P:translation"/>
    <property type="evidence" value="ECO:0007669"/>
    <property type="project" value="UniProtKB-UniRule"/>
</dbReference>
<dbReference type="FunFam" id="1.10.287.3980:FF:000001">
    <property type="entry name" value="Mitochondrial ribosomal protein L34"/>
    <property type="match status" value="1"/>
</dbReference>
<dbReference type="Gene3D" id="1.10.287.3980">
    <property type="match status" value="1"/>
</dbReference>
<dbReference type="HAMAP" id="MF_00391">
    <property type="entry name" value="Ribosomal_bL34"/>
    <property type="match status" value="1"/>
</dbReference>
<dbReference type="InterPro" id="IPR000271">
    <property type="entry name" value="Ribosomal_bL34"/>
</dbReference>
<dbReference type="InterPro" id="IPR020939">
    <property type="entry name" value="Ribosomal_bL34_CS"/>
</dbReference>
<dbReference type="NCBIfam" id="TIGR01030">
    <property type="entry name" value="rpmH_bact"/>
    <property type="match status" value="1"/>
</dbReference>
<dbReference type="PANTHER" id="PTHR14503:SF4">
    <property type="entry name" value="LARGE RIBOSOMAL SUBUNIT PROTEIN BL34M"/>
    <property type="match status" value="1"/>
</dbReference>
<dbReference type="PANTHER" id="PTHR14503">
    <property type="entry name" value="MITOCHONDRIAL RIBOSOMAL PROTEIN 34 FAMILY MEMBER"/>
    <property type="match status" value="1"/>
</dbReference>
<dbReference type="Pfam" id="PF00468">
    <property type="entry name" value="Ribosomal_L34"/>
    <property type="match status" value="1"/>
</dbReference>
<dbReference type="PROSITE" id="PS00784">
    <property type="entry name" value="RIBOSOMAL_L34"/>
    <property type="match status" value="1"/>
</dbReference>
<organism>
    <name type="scientific">Beijerinckia indica subsp. indica (strain ATCC 9039 / DSM 1715 / NCIMB 8712)</name>
    <dbReference type="NCBI Taxonomy" id="395963"/>
    <lineage>
        <taxon>Bacteria</taxon>
        <taxon>Pseudomonadati</taxon>
        <taxon>Pseudomonadota</taxon>
        <taxon>Alphaproteobacteria</taxon>
        <taxon>Hyphomicrobiales</taxon>
        <taxon>Beijerinckiaceae</taxon>
        <taxon>Beijerinckia</taxon>
    </lineage>
</organism>
<gene>
    <name evidence="1" type="primary">rpmH</name>
    <name type="ordered locus">Bind_3326</name>
</gene>
<proteinExistence type="inferred from homology"/>
<reference key="1">
    <citation type="journal article" date="2010" name="J. Bacteriol.">
        <title>Complete genome sequence of Beijerinckia indica subsp. indica.</title>
        <authorList>
            <person name="Tamas I."/>
            <person name="Dedysh S.N."/>
            <person name="Liesack W."/>
            <person name="Stott M.B."/>
            <person name="Alam M."/>
            <person name="Murrell J.C."/>
            <person name="Dunfield P.F."/>
        </authorList>
    </citation>
    <scope>NUCLEOTIDE SEQUENCE [LARGE SCALE GENOMIC DNA]</scope>
    <source>
        <strain>ATCC 9039 / DSM 1715 / NCIMB 8712</strain>
    </source>
</reference>